<evidence type="ECO:0000255" key="1"/>
<evidence type="ECO:0000305" key="2"/>
<gene>
    <name type="primary">COX5C</name>
    <name type="synonym">COXVC</name>
</gene>
<dbReference type="InParanoid" id="P80500"/>
<dbReference type="Proteomes" id="UP000011115">
    <property type="component" value="Unassembled WGS sequence"/>
</dbReference>
<dbReference type="GO" id="GO:0005743">
    <property type="term" value="C:mitochondrial inner membrane"/>
    <property type="evidence" value="ECO:0007669"/>
    <property type="project" value="UniProtKB-SubCell"/>
</dbReference>
<accession>P80500</accession>
<organism>
    <name type="scientific">Solanum tuberosum</name>
    <name type="common">Potato</name>
    <dbReference type="NCBI Taxonomy" id="4113"/>
    <lineage>
        <taxon>Eukaryota</taxon>
        <taxon>Viridiplantae</taxon>
        <taxon>Streptophyta</taxon>
        <taxon>Embryophyta</taxon>
        <taxon>Tracheophyta</taxon>
        <taxon>Spermatophyta</taxon>
        <taxon>Magnoliopsida</taxon>
        <taxon>eudicotyledons</taxon>
        <taxon>Gunneridae</taxon>
        <taxon>Pentapetalae</taxon>
        <taxon>asterids</taxon>
        <taxon>lamiids</taxon>
        <taxon>Solanales</taxon>
        <taxon>Solanaceae</taxon>
        <taxon>Solanoideae</taxon>
        <taxon>Solaneae</taxon>
        <taxon>Solanum</taxon>
    </lineage>
</organism>
<protein>
    <recommendedName>
        <fullName>Cytochrome c oxidase subunit 5C</fullName>
    </recommendedName>
    <alternativeName>
        <fullName>Cytochrome c oxidase polypeptide Vc</fullName>
    </alternativeName>
</protein>
<comment type="function">
    <text>This protein is one of the nuclear-coded polypeptide chains of cytochrome c oxidase, the terminal oxidase in mitochondrial electron transport.</text>
</comment>
<comment type="subcellular location">
    <subcellularLocation>
        <location>Mitochondrion inner membrane</location>
    </subcellularLocation>
</comment>
<comment type="similarity">
    <text evidence="2">Belongs to the cytochrome c oxidase subunit 5C family.</text>
</comment>
<reference key="1">
    <citation type="journal article" date="1996" name="Plant J.">
        <title>New insights into the composition, molecular mass and stoichiometry of the protein complexes of plant mitochondria.</title>
        <authorList>
            <person name="Jansch L."/>
            <person name="Kruft V."/>
            <person name="Schmitz U.K."/>
            <person name="Braun H.P."/>
        </authorList>
    </citation>
    <scope>PROTEIN SEQUENCE</scope>
    <source>
        <tissue>Tuber</tissue>
    </source>
</reference>
<proteinExistence type="evidence at protein level"/>
<feature type="chain" id="PRO_0000128194" description="Cytochrome c oxidase subunit 5C">
    <location>
        <begin position="1"/>
        <end position="30" status="greater than"/>
    </location>
</feature>
<feature type="transmembrane region" description="Helical" evidence="1">
    <location>
        <begin position="15"/>
        <end position="30" status="greater than"/>
    </location>
</feature>
<feature type="non-terminal residue">
    <location>
        <position position="30"/>
    </location>
</feature>
<sequence length="30" mass="3081">AGXXXAHXXYKGPSVVKELVIXXXLGLXAG</sequence>
<name>COX5C_SOLTU</name>
<keyword id="KW-0903">Direct protein sequencing</keyword>
<keyword id="KW-0472">Membrane</keyword>
<keyword id="KW-0496">Mitochondrion</keyword>
<keyword id="KW-0999">Mitochondrion inner membrane</keyword>
<keyword id="KW-1185">Reference proteome</keyword>
<keyword id="KW-0812">Transmembrane</keyword>
<keyword id="KW-1133">Transmembrane helix</keyword>